<sequence length="146" mass="17196">MGNRLNGSYLSNTDMSIEDKQNKYNEAIEDCKICNKVYIKQSGKIDKKELTRIKKLDFFYSQKSDHEIERMFFNVPNGTFLLTDDATNENLFIAQKDLENGSLNIAKLEFKGKALYIDGKDYFSLENYLKTFEDFYKYPLIYNKNE</sequence>
<organismHost>
    <name type="scientific">Ornithodoros</name>
    <name type="common">relapsing fever ticks</name>
    <dbReference type="NCBI Taxonomy" id="6937"/>
</organismHost>
<organismHost>
    <name type="scientific">Phacochoerus aethiopicus</name>
    <name type="common">Warthog</name>
    <dbReference type="NCBI Taxonomy" id="85517"/>
</organismHost>
<organismHost>
    <name type="scientific">Phacochoerus africanus</name>
    <name type="common">Warthog</name>
    <dbReference type="NCBI Taxonomy" id="41426"/>
</organismHost>
<organismHost>
    <name type="scientific">Potamochoerus larvatus</name>
    <name type="common">Bushpig</name>
    <dbReference type="NCBI Taxonomy" id="273792"/>
</organismHost>
<organismHost>
    <name type="scientific">Sus scrofa</name>
    <name type="common">Pig</name>
    <dbReference type="NCBI Taxonomy" id="9823"/>
</organismHost>
<feature type="chain" id="PRO_0000373179" description="Protein MGF 100-3L">
    <location>
        <begin position="1"/>
        <end position="146"/>
    </location>
</feature>
<name>1003L_ASFWA</name>
<accession>P0C9F7</accession>
<evidence type="ECO:0000250" key="1"/>
<evidence type="ECO:0000305" key="2"/>
<keyword id="KW-0244">Early protein</keyword>
<protein>
    <recommendedName>
        <fullName>Protein MGF 100-3L</fullName>
    </recommendedName>
</protein>
<dbReference type="EMBL" id="AY261366">
    <property type="status" value="NOT_ANNOTATED_CDS"/>
    <property type="molecule type" value="Genomic_DNA"/>
</dbReference>
<dbReference type="SMR" id="P0C9F7"/>
<dbReference type="Proteomes" id="UP000000858">
    <property type="component" value="Segment"/>
</dbReference>
<proteinExistence type="inferred from homology"/>
<comment type="function">
    <text evidence="1">Plays a role in virus cell tropism, and may be required for efficient virus replication in macrophages.</text>
</comment>
<comment type="induction">
    <text evidence="2">Expressed in the early phase of the viral replicative cycle.</text>
</comment>
<comment type="similarity">
    <text evidence="2">Belongs to the asfivirus MGF 100 family.</text>
</comment>
<gene>
    <name type="ordered locus">War-162</name>
</gene>
<organism>
    <name type="scientific">African swine fever virus (isolate Warthog/Namibia/Wart80/1980)</name>
    <name type="common">ASFV</name>
    <dbReference type="NCBI Taxonomy" id="561444"/>
    <lineage>
        <taxon>Viruses</taxon>
        <taxon>Varidnaviria</taxon>
        <taxon>Bamfordvirae</taxon>
        <taxon>Nucleocytoviricota</taxon>
        <taxon>Pokkesviricetes</taxon>
        <taxon>Asfuvirales</taxon>
        <taxon>Asfarviridae</taxon>
        <taxon>Asfivirus</taxon>
        <taxon>African swine fever virus</taxon>
    </lineage>
</organism>
<reference key="1">
    <citation type="submission" date="2003-03" db="EMBL/GenBank/DDBJ databases">
        <title>African swine fever virus genomes.</title>
        <authorList>
            <person name="Kutish G.F."/>
            <person name="Rock D.L."/>
        </authorList>
    </citation>
    <scope>NUCLEOTIDE SEQUENCE [LARGE SCALE GENOMIC DNA]</scope>
</reference>